<accession>Q84L33</accession>
<accession>Q84L34</accession>
<accession>Q8LA46</accession>
<accession>Q94CE9</accession>
<accession>Q9MA10</accession>
<evidence type="ECO:0000250" key="1"/>
<evidence type="ECO:0000255" key="2">
    <source>
        <dbReference type="PROSITE-ProRule" id="PRU00212"/>
    </source>
</evidence>
<evidence type="ECO:0000255" key="3">
    <source>
        <dbReference type="PROSITE-ProRule" id="PRU00214"/>
    </source>
</evidence>
<evidence type="ECO:0000256" key="4">
    <source>
        <dbReference type="SAM" id="MobiDB-lite"/>
    </source>
</evidence>
<evidence type="ECO:0000269" key="5">
    <source>
    </source>
</evidence>
<evidence type="ECO:0000269" key="6">
    <source>
    </source>
</evidence>
<evidence type="ECO:0000269" key="7">
    <source>
    </source>
</evidence>
<evidence type="ECO:0000269" key="8">
    <source>
    </source>
</evidence>
<evidence type="ECO:0000303" key="9">
    <source>
    </source>
</evidence>
<evidence type="ECO:0000303" key="10">
    <source>
    </source>
</evidence>
<evidence type="ECO:0000303" key="11">
    <source>
    </source>
</evidence>
<evidence type="ECO:0000303" key="12">
    <source>
    </source>
</evidence>
<evidence type="ECO:0000303" key="13">
    <source ref="1"/>
</evidence>
<evidence type="ECO:0000305" key="14"/>
<evidence type="ECO:0000312" key="15">
    <source>
        <dbReference type="Araport" id="AT1G79650"/>
    </source>
</evidence>
<evidence type="ECO:0000312" key="16">
    <source>
        <dbReference type="EMBL" id="AAF68123.1"/>
    </source>
</evidence>
<sequence>MKLTVKTLKGSHFEIRVLPSDTIMAVKKNIEDSQGKDNYPCGQQLLIHNGKVLKDETSLVENKVTEEGFLVVMLSKSKSGGSAGQASVQTSSVSQPVSATTSSTKPAAPSTTQSSPVPASPIPAQEQPAAQTDTYGQAASTLVSGSSLEQMVQQIMEMGGGSWDKETVTRALRAAYNNPERAVDYLYSGIPQTAEVAVPVPEAQIAGSGAAPVAPASGGPNSSPLDLFPQETVAAAGSGDLGTLEFLRNNDQFQQLRTMVHSNPQILQPMLQELGKQNPQLLRLIQENQAEFLQLVNEPYEGSDGEGDMFDQPEQEMPHAINVTPAEQEAIQRLEAMGFDRALVIEAFLACDRNEELAANYLLENSGDFED</sequence>
<dbReference type="EMBL" id="AB109193">
    <property type="protein sequence ID" value="BAC76389.1"/>
    <property type="molecule type" value="mRNA"/>
</dbReference>
<dbReference type="EMBL" id="AB109194">
    <property type="protein sequence ID" value="BAC76390.1"/>
    <property type="molecule type" value="mRNA"/>
</dbReference>
<dbReference type="EMBL" id="AC010793">
    <property type="protein sequence ID" value="AAF68123.1"/>
    <property type="status" value="ALT_SEQ"/>
    <property type="molecule type" value="Genomic_DNA"/>
</dbReference>
<dbReference type="EMBL" id="CP002684">
    <property type="protein sequence ID" value="AEE36279.1"/>
    <property type="molecule type" value="Genomic_DNA"/>
</dbReference>
<dbReference type="EMBL" id="CP002684">
    <property type="protein sequence ID" value="AEE36281.1"/>
    <property type="molecule type" value="Genomic_DNA"/>
</dbReference>
<dbReference type="EMBL" id="AY034912">
    <property type="protein sequence ID" value="AAK59419.1"/>
    <property type="molecule type" value="mRNA"/>
</dbReference>
<dbReference type="EMBL" id="AY063103">
    <property type="protein sequence ID" value="AAL34277.1"/>
    <property type="molecule type" value="mRNA"/>
</dbReference>
<dbReference type="EMBL" id="AY088037">
    <property type="protein sequence ID" value="AAM65583.1"/>
    <property type="molecule type" value="mRNA"/>
</dbReference>
<dbReference type="PIR" id="F96827">
    <property type="entry name" value="F96827"/>
</dbReference>
<dbReference type="RefSeq" id="NP_565216.2">
    <molecule id="Q84L33-2"/>
    <property type="nucleotide sequence ID" value="NM_106614.6"/>
</dbReference>
<dbReference type="RefSeq" id="NP_850982.1">
    <molecule id="Q84L33-1"/>
    <property type="nucleotide sequence ID" value="NM_180651.3"/>
</dbReference>
<dbReference type="SMR" id="Q84L33"/>
<dbReference type="BioGRID" id="29522">
    <property type="interactions" value="6"/>
</dbReference>
<dbReference type="FunCoup" id="Q84L33">
    <property type="interactions" value="4122"/>
</dbReference>
<dbReference type="IntAct" id="Q84L33">
    <property type="interactions" value="2"/>
</dbReference>
<dbReference type="MINT" id="Q84L33"/>
<dbReference type="STRING" id="3702.Q84L33"/>
<dbReference type="GlyGen" id="Q84L33">
    <property type="glycosylation" value="1 site"/>
</dbReference>
<dbReference type="PaxDb" id="3702-AT1G79650.4"/>
<dbReference type="ProteomicsDB" id="236223">
    <molecule id="Q84L33-1"/>
</dbReference>
<dbReference type="EnsemblPlants" id="AT1G79650.1">
    <molecule id="Q84L33-1"/>
    <property type="protein sequence ID" value="AT1G79650.1"/>
    <property type="gene ID" value="AT1G79650"/>
</dbReference>
<dbReference type="EnsemblPlants" id="AT1G79650.2">
    <molecule id="Q84L33-2"/>
    <property type="protein sequence ID" value="AT1G79650.2"/>
    <property type="gene ID" value="AT1G79650"/>
</dbReference>
<dbReference type="GeneID" id="844304"/>
<dbReference type="Gramene" id="AT1G79650.1">
    <molecule id="Q84L33-1"/>
    <property type="protein sequence ID" value="AT1G79650.1"/>
    <property type="gene ID" value="AT1G79650"/>
</dbReference>
<dbReference type="Gramene" id="AT1G79650.2">
    <molecule id="Q84L33-2"/>
    <property type="protein sequence ID" value="AT1G79650.2"/>
    <property type="gene ID" value="AT1G79650"/>
</dbReference>
<dbReference type="KEGG" id="ath:AT1G79650"/>
<dbReference type="Araport" id="AT1G79650"/>
<dbReference type="TAIR" id="AT1G79650">
    <property type="gene designation" value="RAD23B"/>
</dbReference>
<dbReference type="eggNOG" id="KOG0011">
    <property type="taxonomic scope" value="Eukaryota"/>
</dbReference>
<dbReference type="InParanoid" id="Q84L33"/>
<dbReference type="OMA" id="PHMLEPI"/>
<dbReference type="PhylomeDB" id="Q84L33"/>
<dbReference type="PRO" id="PR:Q84L33"/>
<dbReference type="Proteomes" id="UP000006548">
    <property type="component" value="Chromosome 1"/>
</dbReference>
<dbReference type="ExpressionAtlas" id="Q84L33">
    <property type="expression patterns" value="baseline and differential"/>
</dbReference>
<dbReference type="GO" id="GO:0005737">
    <property type="term" value="C:cytoplasm"/>
    <property type="evidence" value="ECO:0000314"/>
    <property type="project" value="UniProtKB"/>
</dbReference>
<dbReference type="GO" id="GO:0005634">
    <property type="term" value="C:nucleus"/>
    <property type="evidence" value="ECO:0000314"/>
    <property type="project" value="UniProtKB"/>
</dbReference>
<dbReference type="GO" id="GO:0003684">
    <property type="term" value="F:damaged DNA binding"/>
    <property type="evidence" value="ECO:0007669"/>
    <property type="project" value="InterPro"/>
</dbReference>
<dbReference type="GO" id="GO:0031593">
    <property type="term" value="F:polyubiquitin modification-dependent protein binding"/>
    <property type="evidence" value="ECO:0000314"/>
    <property type="project" value="UniProtKB"/>
</dbReference>
<dbReference type="GO" id="GO:0070628">
    <property type="term" value="F:proteasome binding"/>
    <property type="evidence" value="ECO:0000314"/>
    <property type="project" value="UniProtKB"/>
</dbReference>
<dbReference type="GO" id="GO:0006289">
    <property type="term" value="P:nucleotide-excision repair"/>
    <property type="evidence" value="ECO:0007669"/>
    <property type="project" value="InterPro"/>
</dbReference>
<dbReference type="GO" id="GO:0043161">
    <property type="term" value="P:proteasome-mediated ubiquitin-dependent protein catabolic process"/>
    <property type="evidence" value="ECO:0007669"/>
    <property type="project" value="InterPro"/>
</dbReference>
<dbReference type="GO" id="GO:0009411">
    <property type="term" value="P:response to UV"/>
    <property type="evidence" value="ECO:0000315"/>
    <property type="project" value="UniProtKB"/>
</dbReference>
<dbReference type="GO" id="GO:0009650">
    <property type="term" value="P:UV protection"/>
    <property type="evidence" value="ECO:0000315"/>
    <property type="project" value="UniProtKB"/>
</dbReference>
<dbReference type="CDD" id="cd14379">
    <property type="entry name" value="UBA1_Rad23_plant"/>
    <property type="match status" value="1"/>
</dbReference>
<dbReference type="CDD" id="cd14382">
    <property type="entry name" value="UBA2_RAD23_plant"/>
    <property type="match status" value="1"/>
</dbReference>
<dbReference type="CDD" id="cd01805">
    <property type="entry name" value="Ubl_Rad23"/>
    <property type="match status" value="1"/>
</dbReference>
<dbReference type="FunFam" id="3.10.20.90:FF:000069">
    <property type="entry name" value="UV excision repair protein RAD23"/>
    <property type="match status" value="1"/>
</dbReference>
<dbReference type="FunFam" id="1.10.10.540:FF:000001">
    <property type="entry name" value="UV excision repair protein RAD23 B"/>
    <property type="match status" value="1"/>
</dbReference>
<dbReference type="FunFam" id="1.10.8.10:FF:000002">
    <property type="entry name" value="UV excision repair protein RAD23 homolog"/>
    <property type="match status" value="1"/>
</dbReference>
<dbReference type="FunFam" id="1.10.8.10:FF:000003">
    <property type="entry name" value="UV excision repair protein RAD23 homolog"/>
    <property type="match status" value="1"/>
</dbReference>
<dbReference type="Gene3D" id="1.10.8.10">
    <property type="entry name" value="DNA helicase RuvA subunit, C-terminal domain"/>
    <property type="match status" value="2"/>
</dbReference>
<dbReference type="Gene3D" id="3.10.20.90">
    <property type="entry name" value="Phosphatidylinositol 3-kinase Catalytic Subunit, Chain A, domain 1"/>
    <property type="match status" value="1"/>
</dbReference>
<dbReference type="Gene3D" id="1.10.10.540">
    <property type="entry name" value="XPC-binding domain"/>
    <property type="match status" value="1"/>
</dbReference>
<dbReference type="InterPro" id="IPR004806">
    <property type="entry name" value="Rad23"/>
</dbReference>
<dbReference type="InterPro" id="IPR006636">
    <property type="entry name" value="STI1_HS-bd"/>
</dbReference>
<dbReference type="InterPro" id="IPR015940">
    <property type="entry name" value="UBA"/>
</dbReference>
<dbReference type="InterPro" id="IPR009060">
    <property type="entry name" value="UBA-like_sf"/>
</dbReference>
<dbReference type="InterPro" id="IPR000626">
    <property type="entry name" value="Ubiquitin-like_dom"/>
</dbReference>
<dbReference type="InterPro" id="IPR029071">
    <property type="entry name" value="Ubiquitin-like_domsf"/>
</dbReference>
<dbReference type="InterPro" id="IPR015360">
    <property type="entry name" value="XPC-bd"/>
</dbReference>
<dbReference type="InterPro" id="IPR036353">
    <property type="entry name" value="XPC-bd_sf"/>
</dbReference>
<dbReference type="NCBIfam" id="TIGR00601">
    <property type="entry name" value="rad23"/>
    <property type="match status" value="1"/>
</dbReference>
<dbReference type="PANTHER" id="PTHR10621">
    <property type="entry name" value="UV EXCISION REPAIR PROTEIN RAD23"/>
    <property type="match status" value="1"/>
</dbReference>
<dbReference type="PANTHER" id="PTHR10621:SF0">
    <property type="entry name" value="UV EXCISION REPAIR PROTEIN RAD23"/>
    <property type="match status" value="1"/>
</dbReference>
<dbReference type="Pfam" id="PF00627">
    <property type="entry name" value="UBA"/>
    <property type="match status" value="2"/>
</dbReference>
<dbReference type="Pfam" id="PF00240">
    <property type="entry name" value="ubiquitin"/>
    <property type="match status" value="1"/>
</dbReference>
<dbReference type="Pfam" id="PF09280">
    <property type="entry name" value="XPC-binding"/>
    <property type="match status" value="1"/>
</dbReference>
<dbReference type="PRINTS" id="PR01839">
    <property type="entry name" value="RAD23PROTEIN"/>
</dbReference>
<dbReference type="SMART" id="SM00727">
    <property type="entry name" value="STI1"/>
    <property type="match status" value="1"/>
</dbReference>
<dbReference type="SMART" id="SM00165">
    <property type="entry name" value="UBA"/>
    <property type="match status" value="2"/>
</dbReference>
<dbReference type="SMART" id="SM00213">
    <property type="entry name" value="UBQ"/>
    <property type="match status" value="1"/>
</dbReference>
<dbReference type="SUPFAM" id="SSF46934">
    <property type="entry name" value="UBA-like"/>
    <property type="match status" value="2"/>
</dbReference>
<dbReference type="SUPFAM" id="SSF54236">
    <property type="entry name" value="Ubiquitin-like"/>
    <property type="match status" value="1"/>
</dbReference>
<dbReference type="SUPFAM" id="SSF101238">
    <property type="entry name" value="XPC-binding domain"/>
    <property type="match status" value="1"/>
</dbReference>
<dbReference type="PROSITE" id="PS50030">
    <property type="entry name" value="UBA"/>
    <property type="match status" value="2"/>
</dbReference>
<dbReference type="PROSITE" id="PS50053">
    <property type="entry name" value="UBIQUITIN_2"/>
    <property type="match status" value="1"/>
</dbReference>
<feature type="chain" id="PRO_0000114908" description="Ubiquitin receptor RAD23b">
    <location>
        <begin position="1"/>
        <end position="371"/>
    </location>
</feature>
<feature type="domain" description="Ubiquitin-like" evidence="3">
    <location>
        <begin position="1"/>
        <end position="79"/>
    </location>
</feature>
<feature type="domain" description="UBA 1" evidence="2">
    <location>
        <begin position="146"/>
        <end position="189"/>
    </location>
</feature>
<feature type="domain" description="STI1">
    <location>
        <begin position="242"/>
        <end position="285"/>
    </location>
</feature>
<feature type="domain" description="UBA 2" evidence="2">
    <location>
        <begin position="325"/>
        <end position="365"/>
    </location>
</feature>
<feature type="region of interest" description="Disordered" evidence="4">
    <location>
        <begin position="79"/>
        <end position="142"/>
    </location>
</feature>
<feature type="compositionally biased region" description="Low complexity" evidence="4">
    <location>
        <begin position="79"/>
        <end position="117"/>
    </location>
</feature>
<feature type="compositionally biased region" description="Polar residues" evidence="4">
    <location>
        <begin position="128"/>
        <end position="142"/>
    </location>
</feature>
<feature type="splice variant" id="VSP_011875" description="In isoform 2." evidence="9 13">
    <location>
        <begin position="89"/>
        <end position="94"/>
    </location>
</feature>
<feature type="mutagenesis site" description="Abolishes interaction with RPN10." evidence="7">
    <original>I</original>
    <variation>A</variation>
    <location>
        <position position="47"/>
    </location>
</feature>
<feature type="sequence conflict" description="In Ref. 1; BAC76389/BAC76390." evidence="14" ref="1">
    <original>FQ</original>
    <variation>LE</variation>
    <location>
        <begin position="253"/>
        <end position="254"/>
    </location>
</feature>
<name>RD23B_ARATH</name>
<reference key="1">
    <citation type="submission" date="2003-04" db="EMBL/GenBank/DDBJ databases">
        <title>Isolation of four RAD23 genes from Arabidopsis thaliana and detection of alternative splicing variants.</title>
        <authorList>
            <person name="Ishikawa Y."/>
            <person name="Endo M."/>
            <person name="Abe K."/>
            <person name="Osakabe K."/>
            <person name="Nakajima N."/>
            <person name="Saji H."/>
            <person name="Ito Y."/>
            <person name="Ichikawa H."/>
            <person name="Kameya T."/>
            <person name="Toki S."/>
        </authorList>
    </citation>
    <scope>NUCLEOTIDE SEQUENCE [MRNA] (ISOFORMS 1 AND 2)</scope>
    <source>
        <strain>cv. Columbia</strain>
        <tissue>Flower bud</tissue>
    </source>
</reference>
<reference key="2">
    <citation type="journal article" date="2000" name="Nature">
        <title>Sequence and analysis of chromosome 1 of the plant Arabidopsis thaliana.</title>
        <authorList>
            <person name="Theologis A."/>
            <person name="Ecker J.R."/>
            <person name="Palm C.J."/>
            <person name="Federspiel N.A."/>
            <person name="Kaul S."/>
            <person name="White O."/>
            <person name="Alonso J."/>
            <person name="Altafi H."/>
            <person name="Araujo R."/>
            <person name="Bowman C.L."/>
            <person name="Brooks S.Y."/>
            <person name="Buehler E."/>
            <person name="Chan A."/>
            <person name="Chao Q."/>
            <person name="Chen H."/>
            <person name="Cheuk R.F."/>
            <person name="Chin C.W."/>
            <person name="Chung M.K."/>
            <person name="Conn L."/>
            <person name="Conway A.B."/>
            <person name="Conway A.R."/>
            <person name="Creasy T.H."/>
            <person name="Dewar K."/>
            <person name="Dunn P."/>
            <person name="Etgu P."/>
            <person name="Feldblyum T.V."/>
            <person name="Feng J.-D."/>
            <person name="Fong B."/>
            <person name="Fujii C.Y."/>
            <person name="Gill J.E."/>
            <person name="Goldsmith A.D."/>
            <person name="Haas B."/>
            <person name="Hansen N.F."/>
            <person name="Hughes B."/>
            <person name="Huizar L."/>
            <person name="Hunter J.L."/>
            <person name="Jenkins J."/>
            <person name="Johnson-Hopson C."/>
            <person name="Khan S."/>
            <person name="Khaykin E."/>
            <person name="Kim C.J."/>
            <person name="Koo H.L."/>
            <person name="Kremenetskaia I."/>
            <person name="Kurtz D.B."/>
            <person name="Kwan A."/>
            <person name="Lam B."/>
            <person name="Langin-Hooper S."/>
            <person name="Lee A."/>
            <person name="Lee J.M."/>
            <person name="Lenz C.A."/>
            <person name="Li J.H."/>
            <person name="Li Y.-P."/>
            <person name="Lin X."/>
            <person name="Liu S.X."/>
            <person name="Liu Z.A."/>
            <person name="Luros J.S."/>
            <person name="Maiti R."/>
            <person name="Marziali A."/>
            <person name="Militscher J."/>
            <person name="Miranda M."/>
            <person name="Nguyen M."/>
            <person name="Nierman W.C."/>
            <person name="Osborne B.I."/>
            <person name="Pai G."/>
            <person name="Peterson J."/>
            <person name="Pham P.K."/>
            <person name="Rizzo M."/>
            <person name="Rooney T."/>
            <person name="Rowley D."/>
            <person name="Sakano H."/>
            <person name="Salzberg S.L."/>
            <person name="Schwartz J.R."/>
            <person name="Shinn P."/>
            <person name="Southwick A.M."/>
            <person name="Sun H."/>
            <person name="Tallon L.J."/>
            <person name="Tambunga G."/>
            <person name="Toriumi M.J."/>
            <person name="Town C.D."/>
            <person name="Utterback T."/>
            <person name="Van Aken S."/>
            <person name="Vaysberg M."/>
            <person name="Vysotskaia V.S."/>
            <person name="Walker M."/>
            <person name="Wu D."/>
            <person name="Yu G."/>
            <person name="Fraser C.M."/>
            <person name="Venter J.C."/>
            <person name="Davis R.W."/>
        </authorList>
    </citation>
    <scope>NUCLEOTIDE SEQUENCE [LARGE SCALE GENOMIC DNA]</scope>
    <source>
        <strain>cv. Columbia</strain>
    </source>
</reference>
<reference key="3">
    <citation type="journal article" date="2017" name="Plant J.">
        <title>Araport11: a complete reannotation of the Arabidopsis thaliana reference genome.</title>
        <authorList>
            <person name="Cheng C.Y."/>
            <person name="Krishnakumar V."/>
            <person name="Chan A.P."/>
            <person name="Thibaud-Nissen F."/>
            <person name="Schobel S."/>
            <person name="Town C.D."/>
        </authorList>
    </citation>
    <scope>GENOME REANNOTATION</scope>
    <source>
        <strain>cv. Columbia</strain>
    </source>
</reference>
<reference key="4">
    <citation type="journal article" date="2003" name="Science">
        <title>Empirical analysis of transcriptional activity in the Arabidopsis genome.</title>
        <authorList>
            <person name="Yamada K."/>
            <person name="Lim J."/>
            <person name="Dale J.M."/>
            <person name="Chen H."/>
            <person name="Shinn P."/>
            <person name="Palm C.J."/>
            <person name="Southwick A.M."/>
            <person name="Wu H.C."/>
            <person name="Kim C.J."/>
            <person name="Nguyen M."/>
            <person name="Pham P.K."/>
            <person name="Cheuk R.F."/>
            <person name="Karlin-Newmann G."/>
            <person name="Liu S.X."/>
            <person name="Lam B."/>
            <person name="Sakano H."/>
            <person name="Wu T."/>
            <person name="Yu G."/>
            <person name="Miranda M."/>
            <person name="Quach H.L."/>
            <person name="Tripp M."/>
            <person name="Chang C.H."/>
            <person name="Lee J.M."/>
            <person name="Toriumi M.J."/>
            <person name="Chan M.M."/>
            <person name="Tang C.C."/>
            <person name="Onodera C.S."/>
            <person name="Deng J.M."/>
            <person name="Akiyama K."/>
            <person name="Ansari Y."/>
            <person name="Arakawa T."/>
            <person name="Banh J."/>
            <person name="Banno F."/>
            <person name="Bowser L."/>
            <person name="Brooks S.Y."/>
            <person name="Carninci P."/>
            <person name="Chao Q."/>
            <person name="Choy N."/>
            <person name="Enju A."/>
            <person name="Goldsmith A.D."/>
            <person name="Gurjal M."/>
            <person name="Hansen N.F."/>
            <person name="Hayashizaki Y."/>
            <person name="Johnson-Hopson C."/>
            <person name="Hsuan V.W."/>
            <person name="Iida K."/>
            <person name="Karnes M."/>
            <person name="Khan S."/>
            <person name="Koesema E."/>
            <person name="Ishida J."/>
            <person name="Jiang P.X."/>
            <person name="Jones T."/>
            <person name="Kawai J."/>
            <person name="Kamiya A."/>
            <person name="Meyers C."/>
            <person name="Nakajima M."/>
            <person name="Narusaka M."/>
            <person name="Seki M."/>
            <person name="Sakurai T."/>
            <person name="Satou M."/>
            <person name="Tamse R."/>
            <person name="Vaysberg M."/>
            <person name="Wallender E.K."/>
            <person name="Wong C."/>
            <person name="Yamamura Y."/>
            <person name="Yuan S."/>
            <person name="Shinozaki K."/>
            <person name="Davis R.W."/>
            <person name="Theologis A."/>
            <person name="Ecker J.R."/>
        </authorList>
    </citation>
    <scope>NUCLEOTIDE SEQUENCE [LARGE SCALE MRNA] (ISOFORM 2)</scope>
    <source>
        <strain>cv. Columbia</strain>
    </source>
</reference>
<reference key="5">
    <citation type="submission" date="2002-03" db="EMBL/GenBank/DDBJ databases">
        <title>Full-length cDNA from Arabidopsis thaliana.</title>
        <authorList>
            <person name="Brover V.V."/>
            <person name="Troukhan M.E."/>
            <person name="Alexandrov N.A."/>
            <person name="Lu Y.-P."/>
            <person name="Flavell R.B."/>
            <person name="Feldmann K.A."/>
        </authorList>
    </citation>
    <scope>NUCLEOTIDE SEQUENCE [LARGE SCALE MRNA] (ISOFORM 1)</scope>
</reference>
<reference key="6">
    <citation type="journal article" date="2010" name="FEBS J.">
        <title>Cross-species divergence of the major recognition pathways of ubiquitylated substrates for ubiquitin/26S proteasome-mediated proteolysis.</title>
        <authorList>
            <person name="Fatimababy A.S."/>
            <person name="Lin Y.L."/>
            <person name="Usharani R."/>
            <person name="Radjacommare R."/>
            <person name="Wang H.T."/>
            <person name="Tsai H.L."/>
            <person name="Lee Y."/>
            <person name="Fu H."/>
        </authorList>
    </citation>
    <scope>FUNCTION</scope>
    <scope>INTERACTION WITH RPN10</scope>
</reference>
<reference key="7">
    <citation type="journal article" date="2010" name="Plant Cell">
        <title>The RAD23 family provides an essential connection between the 26S proteasome and ubiquitylated proteins in Arabidopsis.</title>
        <authorList>
            <person name="Farmer L.M."/>
            <person name="Book A.J."/>
            <person name="Lee K.H."/>
            <person name="Lin Y.L."/>
            <person name="Fu H."/>
            <person name="Vierstra R.D."/>
        </authorList>
    </citation>
    <scope>GENE FAMILY</scope>
    <scope>TISSUE SPECIFICITY</scope>
    <scope>SUBCELLULAR LOCATION</scope>
    <scope>INTERACTION WITH UBQ AND IAA16</scope>
    <scope>POLYUBIQUITIN BINDING</scope>
    <scope>INTERACTION WITH RPN10</scope>
    <scope>DISRUPTION PHENOTYPE</scope>
    <scope>FUNCTION</scope>
</reference>
<reference key="8">
    <citation type="journal article" date="2010" name="Trends Plant Sci.">
        <title>Proteasomal recognition of ubiquitylated substrates.</title>
        <authorList>
            <person name="Fu H."/>
            <person name="Lin Y.L."/>
            <person name="Fatimababy A.S."/>
        </authorList>
    </citation>
    <scope>REVIEW</scope>
</reference>
<reference key="9">
    <citation type="journal article" date="2011" name="Plant Cell">
        <title>The defective proteasome but not substrate recognition function is responsible for the null phenotypes of the Arabidopsis proteasome subunit RPN10.</title>
        <authorList>
            <person name="Lin Y.-L."/>
            <person name="Sung S.-C."/>
            <person name="Tsai H.-L."/>
            <person name="Yu T.-T."/>
            <person name="Radjacommare R."/>
            <person name="Usharani R."/>
            <person name="Fatimababy A.S."/>
            <person name="Lin H.-Y."/>
            <person name="Wang Y.-Y."/>
            <person name="Fu H."/>
        </authorList>
    </citation>
    <scope>INTERACTION WITH RPN10</scope>
    <scope>MUTAGENESIS OF ILE-47</scope>
</reference>
<reference key="10">
    <citation type="journal article" date="2017" name="Genes (Basel)">
        <title>RAD4 and RAD23/HMR contribute to Arabidopsis UV tolerance.</title>
        <authorList>
            <person name="Lahari T."/>
            <person name="Lazaro J."/>
            <person name="Schroeder D.F."/>
        </authorList>
    </citation>
    <scope>FUNCTION</scope>
    <scope>DISRUPTION PHENOTYPE</scope>
    <scope>INTERACTION WITH RAD4</scope>
    <source>
        <strain>cv. Columbia</strain>
    </source>
</reference>
<proteinExistence type="evidence at protein level"/>
<keyword id="KW-0025">Alternative splicing</keyword>
<keyword id="KW-0963">Cytoplasm</keyword>
<keyword id="KW-0227">DNA damage</keyword>
<keyword id="KW-0234">DNA repair</keyword>
<keyword id="KW-0539">Nucleus</keyword>
<keyword id="KW-1185">Reference proteome</keyword>
<keyword id="KW-0677">Repeat</keyword>
<organism>
    <name type="scientific">Arabidopsis thaliana</name>
    <name type="common">Mouse-ear cress</name>
    <dbReference type="NCBI Taxonomy" id="3702"/>
    <lineage>
        <taxon>Eukaryota</taxon>
        <taxon>Viridiplantae</taxon>
        <taxon>Streptophyta</taxon>
        <taxon>Embryophyta</taxon>
        <taxon>Tracheophyta</taxon>
        <taxon>Spermatophyta</taxon>
        <taxon>Magnoliopsida</taxon>
        <taxon>eudicotyledons</taxon>
        <taxon>Gunneridae</taxon>
        <taxon>Pentapetalae</taxon>
        <taxon>rosids</taxon>
        <taxon>malvids</taxon>
        <taxon>Brassicales</taxon>
        <taxon>Brassicaceae</taxon>
        <taxon>Camelineae</taxon>
        <taxon>Arabidopsis</taxon>
    </lineage>
</organism>
<protein>
    <recommendedName>
        <fullName evidence="11">Ubiquitin receptor RAD23b</fullName>
        <shortName evidence="11">AtRAD23b</shortName>
    </recommendedName>
    <alternativeName>
        <fullName evidence="13">Putative DNA repair protein RAD23-1</fullName>
    </alternativeName>
    <alternativeName>
        <fullName evidence="13">RAD23-like protein 1</fullName>
        <shortName evidence="13">AtRAD23-1</shortName>
    </alternativeName>
</protein>
<gene>
    <name evidence="11" type="primary">RAD23B</name>
    <name evidence="10 12 13" type="synonym">RAD23</name>
    <name evidence="13" type="synonym">RAD23-1</name>
    <name evidence="15" type="ordered locus">At1g79650</name>
    <name evidence="16" type="ORF">F20B17.8</name>
</gene>
<comment type="function">
    <text evidence="1 5 6 8">May be involved in nucleotide excision repair (By similarity). Binds and presumably selects ubiquitin-conjugates for destruction. Prefers multiubiquitin chains rather than single ubiquitins, with a binding affinity for 'Lys-48'-linked ubiquitin chains. Acts as a ubiquitin receptor that associates with the 26S proteasomal docking subunit RPN10 for the indirect recognition of ubiquitinated substrates of ubiquitin/26S proteasome-mediated proteolysis (UPP). Involved in UV tolerance in both roots and hypocotyls, specifically in dark conditions (PubMed:29283431).</text>
</comment>
<comment type="subunit">
    <text evidence="5 6 7 8">Interacts with 'Lys-48'-linked polyubiquitin chains. Interacts with RPN10 via its ubiquitin-like domain. Interacts with UBQ1, UBQ2, UBQ5, UBQ7, UBQ10, UBQ11 and IAA16. Binds to RAD4 (PubMed:29283431).</text>
</comment>
<comment type="interaction">
    <interactant intactId="EBI-20557876">
        <id>Q84L33</id>
    </interactant>
    <interactant intactId="EBI-15193683">
        <id>Q5CCK4</id>
        <label>VAL2</label>
    </interactant>
    <organismsDiffer>false</organismsDiffer>
    <experiments>3</experiments>
</comment>
<comment type="subcellular location">
    <subcellularLocation>
        <location evidence="6">Nucleus</location>
    </subcellularLocation>
    <subcellularLocation>
        <location evidence="6">Cytoplasm</location>
    </subcellularLocation>
</comment>
<comment type="alternative products">
    <event type="alternative splicing"/>
    <isoform>
        <id>Q84L33-1</id>
        <name>1</name>
        <name>alpha</name>
        <name>RAD23bi</name>
        <sequence type="displayed"/>
    </isoform>
    <isoform>
        <id>Q84L33-2</id>
        <name>2</name>
        <name>beta</name>
        <name>RAD23bii</name>
        <sequence type="described" ref="VSP_011875"/>
    </isoform>
</comment>
<comment type="tissue specificity">
    <text evidence="6">Widely expressed in the whole plant.</text>
</comment>
<comment type="disruption phenotype">
    <text evidence="6 8">Slow growth with abnormal phyllotaxy, shorter primary root with fewer lateral roots, shorter inflorescences, smaller siliques and reduced seed set, with unfertilized ovules interspersed among seeds of normal appearance. Mutant displays resistance to mitomycin C (MMC) (PubMed:20086187). Increased UV sensitivity in both roots and hypocotyls, specifically in dark conditions (PubMed:29283431).</text>
</comment>
<comment type="similarity">
    <text evidence="14">Belongs to the RAD23 family.</text>
</comment>
<comment type="sequence caution" evidence="14">
    <conflict type="erroneous gene model prediction">
        <sequence resource="EMBL-CDS" id="AAF68123"/>
    </conflict>
</comment>